<proteinExistence type="inferred from homology"/>
<protein>
    <recommendedName>
        <fullName evidence="1">GTPase Era</fullName>
    </recommendedName>
</protein>
<feature type="chain" id="PRO_1000079765" description="GTPase Era">
    <location>
        <begin position="1"/>
        <end position="301"/>
    </location>
</feature>
<feature type="domain" description="Era-type G" evidence="2">
    <location>
        <begin position="11"/>
        <end position="180"/>
    </location>
</feature>
<feature type="domain" description="KH type-2" evidence="1">
    <location>
        <begin position="210"/>
        <end position="286"/>
    </location>
</feature>
<feature type="region of interest" description="G1" evidence="2">
    <location>
        <begin position="19"/>
        <end position="26"/>
    </location>
</feature>
<feature type="region of interest" description="G2" evidence="2">
    <location>
        <begin position="45"/>
        <end position="49"/>
    </location>
</feature>
<feature type="region of interest" description="G3" evidence="2">
    <location>
        <begin position="66"/>
        <end position="69"/>
    </location>
</feature>
<feature type="region of interest" description="G4" evidence="2">
    <location>
        <begin position="129"/>
        <end position="132"/>
    </location>
</feature>
<feature type="region of interest" description="G5" evidence="2">
    <location>
        <begin position="159"/>
        <end position="161"/>
    </location>
</feature>
<feature type="binding site" evidence="1">
    <location>
        <begin position="19"/>
        <end position="26"/>
    </location>
    <ligand>
        <name>GTP</name>
        <dbReference type="ChEBI" id="CHEBI:37565"/>
    </ligand>
</feature>
<feature type="binding site" evidence="1">
    <location>
        <begin position="66"/>
        <end position="70"/>
    </location>
    <ligand>
        <name>GTP</name>
        <dbReference type="ChEBI" id="CHEBI:37565"/>
    </ligand>
</feature>
<feature type="binding site" evidence="1">
    <location>
        <begin position="129"/>
        <end position="132"/>
    </location>
    <ligand>
        <name>GTP</name>
        <dbReference type="ChEBI" id="CHEBI:37565"/>
    </ligand>
</feature>
<accession>Q83NI3</accession>
<dbReference type="EMBL" id="BX251411">
    <property type="protein sequence ID" value="CAD67155.1"/>
    <property type="molecule type" value="Genomic_DNA"/>
</dbReference>
<dbReference type="RefSeq" id="WP_011096435.1">
    <property type="nucleotide sequence ID" value="NC_004551.1"/>
</dbReference>
<dbReference type="SMR" id="Q83NI3"/>
<dbReference type="GeneID" id="67388267"/>
<dbReference type="KEGG" id="tws:TW488"/>
<dbReference type="HOGENOM" id="CLU_038009_0_2_11"/>
<dbReference type="GO" id="GO:0005829">
    <property type="term" value="C:cytosol"/>
    <property type="evidence" value="ECO:0007669"/>
    <property type="project" value="TreeGrafter"/>
</dbReference>
<dbReference type="GO" id="GO:0005886">
    <property type="term" value="C:plasma membrane"/>
    <property type="evidence" value="ECO:0007669"/>
    <property type="project" value="UniProtKB-SubCell"/>
</dbReference>
<dbReference type="GO" id="GO:0005525">
    <property type="term" value="F:GTP binding"/>
    <property type="evidence" value="ECO:0007669"/>
    <property type="project" value="UniProtKB-UniRule"/>
</dbReference>
<dbReference type="GO" id="GO:0003924">
    <property type="term" value="F:GTPase activity"/>
    <property type="evidence" value="ECO:0007669"/>
    <property type="project" value="UniProtKB-UniRule"/>
</dbReference>
<dbReference type="GO" id="GO:0043024">
    <property type="term" value="F:ribosomal small subunit binding"/>
    <property type="evidence" value="ECO:0007669"/>
    <property type="project" value="TreeGrafter"/>
</dbReference>
<dbReference type="GO" id="GO:0070181">
    <property type="term" value="F:small ribosomal subunit rRNA binding"/>
    <property type="evidence" value="ECO:0007669"/>
    <property type="project" value="UniProtKB-UniRule"/>
</dbReference>
<dbReference type="GO" id="GO:0000028">
    <property type="term" value="P:ribosomal small subunit assembly"/>
    <property type="evidence" value="ECO:0007669"/>
    <property type="project" value="TreeGrafter"/>
</dbReference>
<dbReference type="CDD" id="cd04163">
    <property type="entry name" value="Era"/>
    <property type="match status" value="1"/>
</dbReference>
<dbReference type="CDD" id="cd22534">
    <property type="entry name" value="KH-II_Era"/>
    <property type="match status" value="1"/>
</dbReference>
<dbReference type="Gene3D" id="3.30.300.20">
    <property type="match status" value="1"/>
</dbReference>
<dbReference type="Gene3D" id="3.40.50.300">
    <property type="entry name" value="P-loop containing nucleotide triphosphate hydrolases"/>
    <property type="match status" value="1"/>
</dbReference>
<dbReference type="HAMAP" id="MF_00367">
    <property type="entry name" value="GTPase_Era"/>
    <property type="match status" value="1"/>
</dbReference>
<dbReference type="InterPro" id="IPR030388">
    <property type="entry name" value="G_ERA_dom"/>
</dbReference>
<dbReference type="InterPro" id="IPR006073">
    <property type="entry name" value="GTP-bd"/>
</dbReference>
<dbReference type="InterPro" id="IPR005662">
    <property type="entry name" value="GTPase_Era-like"/>
</dbReference>
<dbReference type="InterPro" id="IPR015946">
    <property type="entry name" value="KH_dom-like_a/b"/>
</dbReference>
<dbReference type="InterPro" id="IPR004044">
    <property type="entry name" value="KH_dom_type_2"/>
</dbReference>
<dbReference type="InterPro" id="IPR009019">
    <property type="entry name" value="KH_sf_prok-type"/>
</dbReference>
<dbReference type="InterPro" id="IPR027417">
    <property type="entry name" value="P-loop_NTPase"/>
</dbReference>
<dbReference type="InterPro" id="IPR005225">
    <property type="entry name" value="Small_GTP-bd"/>
</dbReference>
<dbReference type="NCBIfam" id="TIGR00436">
    <property type="entry name" value="era"/>
    <property type="match status" value="1"/>
</dbReference>
<dbReference type="NCBIfam" id="NF000908">
    <property type="entry name" value="PRK00089.1"/>
    <property type="match status" value="1"/>
</dbReference>
<dbReference type="NCBIfam" id="TIGR00231">
    <property type="entry name" value="small_GTP"/>
    <property type="match status" value="1"/>
</dbReference>
<dbReference type="PANTHER" id="PTHR42698">
    <property type="entry name" value="GTPASE ERA"/>
    <property type="match status" value="1"/>
</dbReference>
<dbReference type="PANTHER" id="PTHR42698:SF1">
    <property type="entry name" value="GTPASE ERA, MITOCHONDRIAL"/>
    <property type="match status" value="1"/>
</dbReference>
<dbReference type="Pfam" id="PF07650">
    <property type="entry name" value="KH_2"/>
    <property type="match status" value="1"/>
</dbReference>
<dbReference type="Pfam" id="PF01926">
    <property type="entry name" value="MMR_HSR1"/>
    <property type="match status" value="1"/>
</dbReference>
<dbReference type="SUPFAM" id="SSF52540">
    <property type="entry name" value="P-loop containing nucleoside triphosphate hydrolases"/>
    <property type="match status" value="1"/>
</dbReference>
<dbReference type="SUPFAM" id="SSF54814">
    <property type="entry name" value="Prokaryotic type KH domain (KH-domain type II)"/>
    <property type="match status" value="1"/>
</dbReference>
<dbReference type="PROSITE" id="PS51713">
    <property type="entry name" value="G_ERA"/>
    <property type="match status" value="1"/>
</dbReference>
<dbReference type="PROSITE" id="PS50823">
    <property type="entry name" value="KH_TYPE_2"/>
    <property type="match status" value="1"/>
</dbReference>
<gene>
    <name evidence="1" type="primary">era</name>
    <name type="ordered locus">TW488</name>
</gene>
<evidence type="ECO:0000255" key="1">
    <source>
        <dbReference type="HAMAP-Rule" id="MF_00367"/>
    </source>
</evidence>
<evidence type="ECO:0000255" key="2">
    <source>
        <dbReference type="PROSITE-ProRule" id="PRU01050"/>
    </source>
</evidence>
<organism>
    <name type="scientific">Tropheryma whipplei (strain TW08/27)</name>
    <name type="common">Whipple's bacillus</name>
    <dbReference type="NCBI Taxonomy" id="218496"/>
    <lineage>
        <taxon>Bacteria</taxon>
        <taxon>Bacillati</taxon>
        <taxon>Actinomycetota</taxon>
        <taxon>Actinomycetes</taxon>
        <taxon>Micrococcales</taxon>
        <taxon>Tropherymataceae</taxon>
        <taxon>Tropheryma</taxon>
    </lineage>
</organism>
<keyword id="KW-1003">Cell membrane</keyword>
<keyword id="KW-0963">Cytoplasm</keyword>
<keyword id="KW-0342">GTP-binding</keyword>
<keyword id="KW-0472">Membrane</keyword>
<keyword id="KW-0547">Nucleotide-binding</keyword>
<keyword id="KW-0690">Ribosome biogenesis</keyword>
<keyword id="KW-0694">RNA-binding</keyword>
<keyword id="KW-0699">rRNA-binding</keyword>
<comment type="function">
    <text evidence="1">An essential GTPase that binds both GDP and GTP, with rapid nucleotide exchange. Plays a role in 16S rRNA processing and 30S ribosomal subunit biogenesis and possibly also in cell cycle regulation and energy metabolism.</text>
</comment>
<comment type="subunit">
    <text evidence="1">Monomer.</text>
</comment>
<comment type="subcellular location">
    <subcellularLocation>
        <location>Cytoplasm</location>
    </subcellularLocation>
    <subcellularLocation>
        <location evidence="1">Cell membrane</location>
        <topology evidence="1">Peripheral membrane protein</topology>
    </subcellularLocation>
</comment>
<comment type="similarity">
    <text evidence="1 2">Belongs to the TRAFAC class TrmE-Era-EngA-EngB-Septin-like GTPase superfamily. Era GTPase family.</text>
</comment>
<name>ERA_TROW8</name>
<sequence length="301" mass="33389">MVVSRSPGGYRSGIITLVGRPNVGKSTLINSLVGEHLSITSDKPQTTRRIIRGVISRMNAQIAITDTPGIHKPKTPFGKGLNEMTTCALSASDSIGICLPVNQKIGSGDRFILDKVEAIGPYKKIAIVTKIDRVEKRDLLLKLSEISDLGCNFAAVVPVSAKRAVQIDLLKDVFFENCLNFSEKLFFDHEKPSVSDQISELIREKALCLLEQEIPHSLLVEVEEILTDSNRVFIHANLYVERNSQKMIVLGKGGRTIKNISITSRLAIESFLGKKVYLRLIVKVVKNWQKSESFLGKIYLS</sequence>
<reference key="1">
    <citation type="journal article" date="2003" name="Lancet">
        <title>Sequencing and analysis of the genome of the Whipple's disease bacterium Tropheryma whipplei.</title>
        <authorList>
            <person name="Bentley S.D."/>
            <person name="Maiwald M."/>
            <person name="Murphy L.D."/>
            <person name="Pallen M.J."/>
            <person name="Yeats C.A."/>
            <person name="Dover L.G."/>
            <person name="Norbertczak H.T."/>
            <person name="Besra G.S."/>
            <person name="Quail M.A."/>
            <person name="Harris D.E."/>
            <person name="von Herbay A."/>
            <person name="Goble A."/>
            <person name="Rutter S."/>
            <person name="Squares R."/>
            <person name="Squares S."/>
            <person name="Barrell B.G."/>
            <person name="Parkhill J."/>
            <person name="Relman D.A."/>
        </authorList>
    </citation>
    <scope>NUCLEOTIDE SEQUENCE [LARGE SCALE GENOMIC DNA]</scope>
    <source>
        <strain>TW08/27</strain>
    </source>
</reference>